<name>PSBE_MESCR</name>
<reference key="1">
    <citation type="journal article" date="1994" name="Plant Physiol.">
        <title>Characterization and expression of photosystem II genes (psbE, psbF, and psbL) from the facultative crassulacean acid metabolism plant Mesembryanthemum crystallinum.</title>
        <authorList>
            <person name="Forsthoefel N.R."/>
            <person name="Cushman J.C."/>
        </authorList>
    </citation>
    <scope>NUCLEOTIDE SEQUENCE [MRNA]</scope>
</reference>
<dbReference type="EMBL" id="U04314">
    <property type="protein sequence ID" value="AAA21857.1"/>
    <property type="molecule type" value="mRNA"/>
</dbReference>
<dbReference type="RefSeq" id="YP_009221824.1">
    <property type="nucleotide sequence ID" value="NC_029049.1"/>
</dbReference>
<dbReference type="SMR" id="P36442"/>
<dbReference type="GeneID" id="26738163"/>
<dbReference type="GO" id="GO:0009535">
    <property type="term" value="C:chloroplast thylakoid membrane"/>
    <property type="evidence" value="ECO:0007669"/>
    <property type="project" value="UniProtKB-SubCell"/>
</dbReference>
<dbReference type="GO" id="GO:0009539">
    <property type="term" value="C:photosystem II reaction center"/>
    <property type="evidence" value="ECO:0007669"/>
    <property type="project" value="InterPro"/>
</dbReference>
<dbReference type="GO" id="GO:0009055">
    <property type="term" value="F:electron transfer activity"/>
    <property type="evidence" value="ECO:0007669"/>
    <property type="project" value="UniProtKB-UniRule"/>
</dbReference>
<dbReference type="GO" id="GO:0020037">
    <property type="term" value="F:heme binding"/>
    <property type="evidence" value="ECO:0007669"/>
    <property type="project" value="InterPro"/>
</dbReference>
<dbReference type="GO" id="GO:0005506">
    <property type="term" value="F:iron ion binding"/>
    <property type="evidence" value="ECO:0007669"/>
    <property type="project" value="UniProtKB-UniRule"/>
</dbReference>
<dbReference type="GO" id="GO:0009767">
    <property type="term" value="P:photosynthetic electron transport chain"/>
    <property type="evidence" value="ECO:0007669"/>
    <property type="project" value="InterPro"/>
</dbReference>
<dbReference type="Gene3D" id="1.20.5.860">
    <property type="entry name" value="Photosystem II cytochrome b559, alpha subunit"/>
    <property type="match status" value="1"/>
</dbReference>
<dbReference type="HAMAP" id="MF_00642">
    <property type="entry name" value="PSII_PsbE"/>
    <property type="match status" value="1"/>
</dbReference>
<dbReference type="InterPro" id="IPR006217">
    <property type="entry name" value="PSII_cyt_b559_asu"/>
</dbReference>
<dbReference type="InterPro" id="IPR037025">
    <property type="entry name" value="PSII_cyt_b559_asu_sf"/>
</dbReference>
<dbReference type="InterPro" id="IPR006216">
    <property type="entry name" value="PSII_cyt_b559_CS"/>
</dbReference>
<dbReference type="InterPro" id="IPR013081">
    <property type="entry name" value="PSII_cyt_b559_N"/>
</dbReference>
<dbReference type="InterPro" id="IPR013082">
    <property type="entry name" value="PSII_cytb559_asu_lum"/>
</dbReference>
<dbReference type="NCBIfam" id="TIGR01332">
    <property type="entry name" value="cyt_b559_alpha"/>
    <property type="match status" value="1"/>
</dbReference>
<dbReference type="PANTHER" id="PTHR33391">
    <property type="entry name" value="CYTOCHROME B559 SUBUNIT BETA-RELATED"/>
    <property type="match status" value="1"/>
</dbReference>
<dbReference type="PANTHER" id="PTHR33391:SF9">
    <property type="entry name" value="CYTOCHROME B559 SUBUNIT BETA-RELATED"/>
    <property type="match status" value="1"/>
</dbReference>
<dbReference type="Pfam" id="PF00283">
    <property type="entry name" value="Cytochrom_B559"/>
    <property type="match status" value="1"/>
</dbReference>
<dbReference type="Pfam" id="PF00284">
    <property type="entry name" value="Cytochrom_B559a"/>
    <property type="match status" value="1"/>
</dbReference>
<dbReference type="PIRSF" id="PIRSF000036">
    <property type="entry name" value="PsbE"/>
    <property type="match status" value="1"/>
</dbReference>
<dbReference type="SUPFAM" id="SSF161045">
    <property type="entry name" value="Cytochrome b559 subunits"/>
    <property type="match status" value="1"/>
</dbReference>
<dbReference type="PROSITE" id="PS00537">
    <property type="entry name" value="CYTOCHROME_B559"/>
    <property type="match status" value="1"/>
</dbReference>
<protein>
    <recommendedName>
        <fullName evidence="1">Cytochrome b559 subunit alpha</fullName>
    </recommendedName>
    <alternativeName>
        <fullName evidence="1">PSII reaction center subunit V</fullName>
    </alternativeName>
</protein>
<proteinExistence type="inferred from homology"/>
<keyword id="KW-0150">Chloroplast</keyword>
<keyword id="KW-0249">Electron transport</keyword>
<keyword id="KW-0349">Heme</keyword>
<keyword id="KW-0408">Iron</keyword>
<keyword id="KW-0472">Membrane</keyword>
<keyword id="KW-0479">Metal-binding</keyword>
<keyword id="KW-0602">Photosynthesis</keyword>
<keyword id="KW-0604">Photosystem II</keyword>
<keyword id="KW-0934">Plastid</keyword>
<keyword id="KW-0793">Thylakoid</keyword>
<keyword id="KW-0812">Transmembrane</keyword>
<keyword id="KW-1133">Transmembrane helix</keyword>
<keyword id="KW-0813">Transport</keyword>
<feature type="chain" id="PRO_0000200318" description="Cytochrome b559 subunit alpha">
    <location>
        <begin position="1"/>
        <end position="83"/>
    </location>
</feature>
<feature type="transmembrane region" description="Helical" evidence="1">
    <location>
        <begin position="21"/>
        <end position="35"/>
    </location>
</feature>
<feature type="binding site" description="axial binding residue" evidence="1">
    <location>
        <position position="23"/>
    </location>
    <ligand>
        <name>heme</name>
        <dbReference type="ChEBI" id="CHEBI:30413"/>
        <note>ligand shared with beta subunit</note>
    </ligand>
    <ligandPart>
        <name>Fe</name>
        <dbReference type="ChEBI" id="CHEBI:18248"/>
    </ligandPart>
</feature>
<accession>P36442</accession>
<evidence type="ECO:0000255" key="1">
    <source>
        <dbReference type="HAMAP-Rule" id="MF_00642"/>
    </source>
</evidence>
<organism>
    <name type="scientific">Mesembryanthemum crystallinum</name>
    <name type="common">Common ice plant</name>
    <name type="synonym">Cryophytum crystallinum</name>
    <dbReference type="NCBI Taxonomy" id="3544"/>
    <lineage>
        <taxon>Eukaryota</taxon>
        <taxon>Viridiplantae</taxon>
        <taxon>Streptophyta</taxon>
        <taxon>Embryophyta</taxon>
        <taxon>Tracheophyta</taxon>
        <taxon>Spermatophyta</taxon>
        <taxon>Magnoliopsida</taxon>
        <taxon>eudicotyledons</taxon>
        <taxon>Gunneridae</taxon>
        <taxon>Pentapetalae</taxon>
        <taxon>Caryophyllales</taxon>
        <taxon>Aizoaceae</taxon>
        <taxon>Mesembryanthemum</taxon>
        <taxon>Mesembryanthemum subgen. Cryophytum</taxon>
    </lineage>
</organism>
<gene>
    <name evidence="1" type="primary">psbE</name>
</gene>
<geneLocation type="chloroplast"/>
<comment type="function">
    <text evidence="1">This b-type cytochrome is tightly associated with the reaction center of photosystem II (PSII). PSII is a light-driven water:plastoquinone oxidoreductase that uses light energy to abstract electrons from H(2)O, generating O(2) and a proton gradient subsequently used for ATP formation. It consists of a core antenna complex that captures photons, and an electron transfer chain that converts photonic excitation into a charge separation.</text>
</comment>
<comment type="cofactor">
    <cofactor evidence="1">
        <name>heme b</name>
        <dbReference type="ChEBI" id="CHEBI:60344"/>
    </cofactor>
    <text evidence="1">With its partner (PsbF) binds heme. PSII binds additional chlorophylls, carotenoids and specific lipids.</text>
</comment>
<comment type="subunit">
    <text evidence="1">Heterodimer of an alpha subunit and a beta subunit. PSII is composed of 1 copy each of membrane proteins PsbA, PsbB, PsbC, PsbD, PsbE, PsbF, PsbH, PsbI, PsbJ, PsbK, PsbL, PsbM, PsbT, PsbX, PsbY, PsbZ, Psb30/Ycf12, at least 3 peripheral proteins of the oxygen-evolving complex and a large number of cofactors. It forms dimeric complexes.</text>
</comment>
<comment type="subcellular location">
    <subcellularLocation>
        <location evidence="1">Plastid</location>
        <location evidence="1">Chloroplast thylakoid membrane</location>
        <topology evidence="1">Single-pass membrane protein</topology>
    </subcellularLocation>
</comment>
<comment type="similarity">
    <text evidence="1">Belongs to the PsbE/PsbF family.</text>
</comment>
<sequence>MSGSTGERSFADIITSIRYWVIHSITIPSLFIAGWLFVSTGLAYDVFGSPRPNEYFTESRQGIPLITGRFDSLEQLDEFSKSF</sequence>